<comment type="function">
    <text evidence="1">Single-stranded DNA (ssDNA) bidirectional exonuclease involved in DNA repair. Probably involved in DNA repair following ultraviolet (UV) irradiation and interstrand cross-links (ICLs) damage. Has both 5'-3' and 3'-5' exonuclease activities with a strong preference for 5'-ends (By similarity).</text>
</comment>
<comment type="cofactor">
    <cofactor evidence="3">
        <name>[4Fe-4S] cluster</name>
        <dbReference type="ChEBI" id="CHEBI:49883"/>
    </cofactor>
    <text evidence="3">Binds 1 [4Fe-4S] cluster.</text>
</comment>
<comment type="cofactor">
    <cofactor evidence="2">
        <name>Mg(2+)</name>
        <dbReference type="ChEBI" id="CHEBI:18420"/>
    </cofactor>
</comment>
<comment type="subunit">
    <text evidence="1">Monomer.</text>
</comment>
<comment type="subcellular location">
    <subcellularLocation>
        <location evidence="1">Nucleus</location>
    </subcellularLocation>
    <subcellularLocation>
        <location evidence="1">Cytoplasm</location>
        <location evidence="1">Cytosol</location>
    </subcellularLocation>
</comment>
<comment type="similarity">
    <text evidence="5">Belongs to the EXO5 family.</text>
</comment>
<gene>
    <name type="primary">exo5</name>
    <name type="ORF">zgc:123272</name>
</gene>
<name>EXO5_DANRE</name>
<protein>
    <recommendedName>
        <fullName>Exonuclease V</fullName>
        <shortName>Exo V</shortName>
        <ecNumber>3.1.-.-</ecNumber>
    </recommendedName>
</protein>
<feature type="chain" id="PRO_0000421759" description="Exonuclease V">
    <location>
        <begin position="1"/>
        <end position="394"/>
    </location>
</feature>
<feature type="region of interest" description="Disordered" evidence="4">
    <location>
        <begin position="42"/>
        <end position="79"/>
    </location>
</feature>
<feature type="compositionally biased region" description="Basic and acidic residues" evidence="4">
    <location>
        <begin position="61"/>
        <end position="79"/>
    </location>
</feature>
<feature type="binding site" evidence="1">
    <location>
        <position position="112"/>
    </location>
    <ligand>
        <name>[4Fe-4S] cluster</name>
        <dbReference type="ChEBI" id="CHEBI:49883"/>
    </ligand>
</feature>
<feature type="binding site" evidence="1">
    <location>
        <position position="364"/>
    </location>
    <ligand>
        <name>[4Fe-4S] cluster</name>
        <dbReference type="ChEBI" id="CHEBI:49883"/>
    </ligand>
</feature>
<feature type="binding site" evidence="1">
    <location>
        <position position="367"/>
    </location>
    <ligand>
        <name>[4Fe-4S] cluster</name>
        <dbReference type="ChEBI" id="CHEBI:49883"/>
    </ligand>
</feature>
<feature type="binding site" evidence="1">
    <location>
        <position position="373"/>
    </location>
    <ligand>
        <name>[4Fe-4S] cluster</name>
        <dbReference type="ChEBI" id="CHEBI:49883"/>
    </ligand>
</feature>
<sequence length="394" mass="44989">MMDASRSQQPLDAWDDISDSEFLNIPSDEESIESQLPLIGETKGKHSVNLDKPSSSSSFHKCSEEAPKQEAVKTDDVRGLKRKSLHENSFSPMQRFRKQHLSVTLLCDQTWCEMKSVYNLLKPHIKRKEMQRTEVQIGQEIHLSRELEIQDVVPVDIRTREDGEAVKLLNMLHMIPLLEAGQRVREFPVFGVQEGVFIMGVIDELMYNQKGELVLNELKTRRQNSLPSSAQDKVNCFQVGLYKLLFDGLVRGEMKKNHIFDHLKLRSAQILGAGVQAHAKNLGVHARTFEELVETLLITVSCSDLPCIDLLQIEYFHQGSNGPIGTRVAPFDEAQIRGELQAYLSYWTGQREPKGVDIEEAWKCRSCLYEEICEWRKNRFTVSDQQAAHSSSHL</sequence>
<evidence type="ECO:0000250" key="1"/>
<evidence type="ECO:0000250" key="2">
    <source>
        <dbReference type="UniProtKB" id="P38289"/>
    </source>
</evidence>
<evidence type="ECO:0000250" key="3">
    <source>
        <dbReference type="UniProtKB" id="Q9H790"/>
    </source>
</evidence>
<evidence type="ECO:0000256" key="4">
    <source>
        <dbReference type="SAM" id="MobiDB-lite"/>
    </source>
</evidence>
<evidence type="ECO:0000305" key="5"/>
<organism>
    <name type="scientific">Danio rerio</name>
    <name type="common">Zebrafish</name>
    <name type="synonym">Brachydanio rerio</name>
    <dbReference type="NCBI Taxonomy" id="7955"/>
    <lineage>
        <taxon>Eukaryota</taxon>
        <taxon>Metazoa</taxon>
        <taxon>Chordata</taxon>
        <taxon>Craniata</taxon>
        <taxon>Vertebrata</taxon>
        <taxon>Euteleostomi</taxon>
        <taxon>Actinopterygii</taxon>
        <taxon>Neopterygii</taxon>
        <taxon>Teleostei</taxon>
        <taxon>Ostariophysi</taxon>
        <taxon>Cypriniformes</taxon>
        <taxon>Danionidae</taxon>
        <taxon>Danioninae</taxon>
        <taxon>Danio</taxon>
    </lineage>
</organism>
<proteinExistence type="inferred from homology"/>
<keyword id="KW-0004">4Fe-4S</keyword>
<keyword id="KW-0963">Cytoplasm</keyword>
<keyword id="KW-0227">DNA damage</keyword>
<keyword id="KW-0234">DNA repair</keyword>
<keyword id="KW-0238">DNA-binding</keyword>
<keyword id="KW-0269">Exonuclease</keyword>
<keyword id="KW-0378">Hydrolase</keyword>
<keyword id="KW-0408">Iron</keyword>
<keyword id="KW-0411">Iron-sulfur</keyword>
<keyword id="KW-0460">Magnesium</keyword>
<keyword id="KW-0479">Metal-binding</keyword>
<keyword id="KW-0540">Nuclease</keyword>
<keyword id="KW-0539">Nucleus</keyword>
<keyword id="KW-1185">Reference proteome</keyword>
<reference key="1">
    <citation type="journal article" date="2013" name="Nature">
        <title>The zebrafish reference genome sequence and its relationship to the human genome.</title>
        <authorList>
            <person name="Howe K."/>
            <person name="Clark M.D."/>
            <person name="Torroja C.F."/>
            <person name="Torrance J."/>
            <person name="Berthelot C."/>
            <person name="Muffato M."/>
            <person name="Collins J.E."/>
            <person name="Humphray S."/>
            <person name="McLaren K."/>
            <person name="Matthews L."/>
            <person name="McLaren S."/>
            <person name="Sealy I."/>
            <person name="Caccamo M."/>
            <person name="Churcher C."/>
            <person name="Scott C."/>
            <person name="Barrett J.C."/>
            <person name="Koch R."/>
            <person name="Rauch G.J."/>
            <person name="White S."/>
            <person name="Chow W."/>
            <person name="Kilian B."/>
            <person name="Quintais L.T."/>
            <person name="Guerra-Assuncao J.A."/>
            <person name="Zhou Y."/>
            <person name="Gu Y."/>
            <person name="Yen J."/>
            <person name="Vogel J.H."/>
            <person name="Eyre T."/>
            <person name="Redmond S."/>
            <person name="Banerjee R."/>
            <person name="Chi J."/>
            <person name="Fu B."/>
            <person name="Langley E."/>
            <person name="Maguire S.F."/>
            <person name="Laird G.K."/>
            <person name="Lloyd D."/>
            <person name="Kenyon E."/>
            <person name="Donaldson S."/>
            <person name="Sehra H."/>
            <person name="Almeida-King J."/>
            <person name="Loveland J."/>
            <person name="Trevanion S."/>
            <person name="Jones M."/>
            <person name="Quail M."/>
            <person name="Willey D."/>
            <person name="Hunt A."/>
            <person name="Burton J."/>
            <person name="Sims S."/>
            <person name="McLay K."/>
            <person name="Plumb B."/>
            <person name="Davis J."/>
            <person name="Clee C."/>
            <person name="Oliver K."/>
            <person name="Clark R."/>
            <person name="Riddle C."/>
            <person name="Elliot D."/>
            <person name="Threadgold G."/>
            <person name="Harden G."/>
            <person name="Ware D."/>
            <person name="Begum S."/>
            <person name="Mortimore B."/>
            <person name="Kerry G."/>
            <person name="Heath P."/>
            <person name="Phillimore B."/>
            <person name="Tracey A."/>
            <person name="Corby N."/>
            <person name="Dunn M."/>
            <person name="Johnson C."/>
            <person name="Wood J."/>
            <person name="Clark S."/>
            <person name="Pelan S."/>
            <person name="Griffiths G."/>
            <person name="Smith M."/>
            <person name="Glithero R."/>
            <person name="Howden P."/>
            <person name="Barker N."/>
            <person name="Lloyd C."/>
            <person name="Stevens C."/>
            <person name="Harley J."/>
            <person name="Holt K."/>
            <person name="Panagiotidis G."/>
            <person name="Lovell J."/>
            <person name="Beasley H."/>
            <person name="Henderson C."/>
            <person name="Gordon D."/>
            <person name="Auger K."/>
            <person name="Wright D."/>
            <person name="Collins J."/>
            <person name="Raisen C."/>
            <person name="Dyer L."/>
            <person name="Leung K."/>
            <person name="Robertson L."/>
            <person name="Ambridge K."/>
            <person name="Leongamornlert D."/>
            <person name="McGuire S."/>
            <person name="Gilderthorp R."/>
            <person name="Griffiths C."/>
            <person name="Manthravadi D."/>
            <person name="Nichol S."/>
            <person name="Barker G."/>
            <person name="Whitehead S."/>
            <person name="Kay M."/>
            <person name="Brown J."/>
            <person name="Murnane C."/>
            <person name="Gray E."/>
            <person name="Humphries M."/>
            <person name="Sycamore N."/>
            <person name="Barker D."/>
            <person name="Saunders D."/>
            <person name="Wallis J."/>
            <person name="Babbage A."/>
            <person name="Hammond S."/>
            <person name="Mashreghi-Mohammadi M."/>
            <person name="Barr L."/>
            <person name="Martin S."/>
            <person name="Wray P."/>
            <person name="Ellington A."/>
            <person name="Matthews N."/>
            <person name="Ellwood M."/>
            <person name="Woodmansey R."/>
            <person name="Clark G."/>
            <person name="Cooper J."/>
            <person name="Tromans A."/>
            <person name="Grafham D."/>
            <person name="Skuce C."/>
            <person name="Pandian R."/>
            <person name="Andrews R."/>
            <person name="Harrison E."/>
            <person name="Kimberley A."/>
            <person name="Garnett J."/>
            <person name="Fosker N."/>
            <person name="Hall R."/>
            <person name="Garner P."/>
            <person name="Kelly D."/>
            <person name="Bird C."/>
            <person name="Palmer S."/>
            <person name="Gehring I."/>
            <person name="Berger A."/>
            <person name="Dooley C.M."/>
            <person name="Ersan-Urun Z."/>
            <person name="Eser C."/>
            <person name="Geiger H."/>
            <person name="Geisler M."/>
            <person name="Karotki L."/>
            <person name="Kirn A."/>
            <person name="Konantz J."/>
            <person name="Konantz M."/>
            <person name="Oberlander M."/>
            <person name="Rudolph-Geiger S."/>
            <person name="Teucke M."/>
            <person name="Lanz C."/>
            <person name="Raddatz G."/>
            <person name="Osoegawa K."/>
            <person name="Zhu B."/>
            <person name="Rapp A."/>
            <person name="Widaa S."/>
            <person name="Langford C."/>
            <person name="Yang F."/>
            <person name="Schuster S.C."/>
            <person name="Carter N.P."/>
            <person name="Harrow J."/>
            <person name="Ning Z."/>
            <person name="Herrero J."/>
            <person name="Searle S.M."/>
            <person name="Enright A."/>
            <person name="Geisler R."/>
            <person name="Plasterk R.H."/>
            <person name="Lee C."/>
            <person name="Westerfield M."/>
            <person name="de Jong P.J."/>
            <person name="Zon L.I."/>
            <person name="Postlethwait J.H."/>
            <person name="Nusslein-Volhard C."/>
            <person name="Hubbard T.J."/>
            <person name="Roest Crollius H."/>
            <person name="Rogers J."/>
            <person name="Stemple D.L."/>
        </authorList>
    </citation>
    <scope>NUCLEOTIDE SEQUENCE [LARGE SCALE GENOMIC DNA]</scope>
    <source>
        <strain>Tuebingen</strain>
    </source>
</reference>
<accession>F1Q514</accession>
<dbReference type="EC" id="3.1.-.-"/>
<dbReference type="EMBL" id="BX908796">
    <property type="status" value="NOT_ANNOTATED_CDS"/>
    <property type="molecule type" value="Genomic_DNA"/>
</dbReference>
<dbReference type="RefSeq" id="NP_001410681.1">
    <property type="nucleotide sequence ID" value="NM_001423752.1"/>
</dbReference>
<dbReference type="SMR" id="F1Q514"/>
<dbReference type="FunCoup" id="F1Q514">
    <property type="interactions" value="472"/>
</dbReference>
<dbReference type="STRING" id="7955.ENSDARP00000105428"/>
<dbReference type="PaxDb" id="7955-ENSDARP00000105428"/>
<dbReference type="Ensembl" id="ENSDART00000129154">
    <property type="protein sequence ID" value="ENSDARP00000105428"/>
    <property type="gene ID" value="ENSDARG00000042727"/>
</dbReference>
<dbReference type="GeneID" id="641427"/>
<dbReference type="eggNOG" id="KOG4760">
    <property type="taxonomic scope" value="Eukaryota"/>
</dbReference>
<dbReference type="HOGENOM" id="CLU_013225_0_2_1"/>
<dbReference type="InParanoid" id="F1Q514"/>
<dbReference type="OMA" id="CPDKPLG"/>
<dbReference type="PhylomeDB" id="F1Q514"/>
<dbReference type="TreeFam" id="TF332529"/>
<dbReference type="PRO" id="PR:F1Q514"/>
<dbReference type="Proteomes" id="UP000000437">
    <property type="component" value="Alternate scaffold 15"/>
</dbReference>
<dbReference type="Proteomes" id="UP000000437">
    <property type="component" value="Chromosome 15"/>
</dbReference>
<dbReference type="Bgee" id="ENSDARG00000042727">
    <property type="expression patterns" value="Expressed in mature ovarian follicle and 19 other cell types or tissues"/>
</dbReference>
<dbReference type="ExpressionAtlas" id="F1Q514">
    <property type="expression patterns" value="baseline and differential"/>
</dbReference>
<dbReference type="GO" id="GO:0005829">
    <property type="term" value="C:cytosol"/>
    <property type="evidence" value="ECO:0000250"/>
    <property type="project" value="UniProtKB"/>
</dbReference>
<dbReference type="GO" id="GO:0005634">
    <property type="term" value="C:nucleus"/>
    <property type="evidence" value="ECO:0000250"/>
    <property type="project" value="UniProtKB"/>
</dbReference>
<dbReference type="GO" id="GO:0051539">
    <property type="term" value="F:4 iron, 4 sulfur cluster binding"/>
    <property type="evidence" value="ECO:0000250"/>
    <property type="project" value="UniProtKB"/>
</dbReference>
<dbReference type="GO" id="GO:0003677">
    <property type="term" value="F:DNA binding"/>
    <property type="evidence" value="ECO:0007669"/>
    <property type="project" value="UniProtKB-KW"/>
</dbReference>
<dbReference type="GO" id="GO:0046872">
    <property type="term" value="F:metal ion binding"/>
    <property type="evidence" value="ECO:0007669"/>
    <property type="project" value="UniProtKB-KW"/>
</dbReference>
<dbReference type="GO" id="GO:0045145">
    <property type="term" value="F:single-stranded DNA 5'-3' DNA exonuclease activity"/>
    <property type="evidence" value="ECO:0000250"/>
    <property type="project" value="UniProtKB"/>
</dbReference>
<dbReference type="GO" id="GO:0036297">
    <property type="term" value="P:interstrand cross-link repair"/>
    <property type="evidence" value="ECO:0000250"/>
    <property type="project" value="UniProtKB"/>
</dbReference>
<dbReference type="FunFam" id="3.90.320.10:FF:000004">
    <property type="entry name" value="Probable exonuclease V"/>
    <property type="match status" value="1"/>
</dbReference>
<dbReference type="Gene3D" id="3.90.320.10">
    <property type="match status" value="1"/>
</dbReference>
<dbReference type="InterPro" id="IPR019190">
    <property type="entry name" value="EXOV"/>
</dbReference>
<dbReference type="InterPro" id="IPR011604">
    <property type="entry name" value="PDDEXK-like_dom_sf"/>
</dbReference>
<dbReference type="PANTHER" id="PTHR14464">
    <property type="entry name" value="EXONUCLEASE V"/>
    <property type="match status" value="1"/>
</dbReference>
<dbReference type="PANTHER" id="PTHR14464:SF4">
    <property type="entry name" value="EXONUCLEASE V"/>
    <property type="match status" value="1"/>
</dbReference>
<dbReference type="Pfam" id="PF09810">
    <property type="entry name" value="Exo5"/>
    <property type="match status" value="2"/>
</dbReference>